<comment type="sequence caution" evidence="1">
    <conflict type="erroneous initiation">
        <sequence resource="EMBL-CDS" id="AAC43154"/>
    </conflict>
    <text>Extended N-terminus.</text>
</comment>
<feature type="chain" id="PRO_0000169718" description="Uncharacterized protein YjcB">
    <location>
        <begin position="1"/>
        <end position="93"/>
    </location>
</feature>
<keyword id="KW-1185">Reference proteome</keyword>
<accession>P32700</accession>
<accession>Q2M6P4</accession>
<dbReference type="EMBL" id="U00006">
    <property type="protein sequence ID" value="AAC43154.1"/>
    <property type="status" value="ALT_INIT"/>
    <property type="molecule type" value="Genomic_DNA"/>
</dbReference>
<dbReference type="EMBL" id="U00096">
    <property type="protein sequence ID" value="AAC77030.2"/>
    <property type="molecule type" value="Genomic_DNA"/>
</dbReference>
<dbReference type="EMBL" id="AP009048">
    <property type="protein sequence ID" value="BAE78062.1"/>
    <property type="molecule type" value="Genomic_DNA"/>
</dbReference>
<dbReference type="RefSeq" id="NP_418484.4">
    <property type="nucleotide sequence ID" value="NC_000913.3"/>
</dbReference>
<dbReference type="RefSeq" id="WP_001295689.1">
    <property type="nucleotide sequence ID" value="NZ_STEB01000022.1"/>
</dbReference>
<dbReference type="BioGRID" id="4263246">
    <property type="interactions" value="8"/>
</dbReference>
<dbReference type="BioGRID" id="852863">
    <property type="interactions" value="4"/>
</dbReference>
<dbReference type="FunCoup" id="P32700">
    <property type="interactions" value="22"/>
</dbReference>
<dbReference type="IntAct" id="P32700">
    <property type="interactions" value="4"/>
</dbReference>
<dbReference type="STRING" id="511145.b4060"/>
<dbReference type="PaxDb" id="511145-b4060"/>
<dbReference type="EnsemblBacteria" id="AAC77030">
    <property type="protein sequence ID" value="AAC77030"/>
    <property type="gene ID" value="b4060"/>
</dbReference>
<dbReference type="GeneID" id="948569"/>
<dbReference type="KEGG" id="ecj:JW5718"/>
<dbReference type="KEGG" id="eco:b4060"/>
<dbReference type="KEGG" id="ecoc:C3026_21940"/>
<dbReference type="PATRIC" id="fig|511145.12.peg.4181"/>
<dbReference type="EchoBASE" id="EB1881"/>
<dbReference type="eggNOG" id="ENOG5032SPC">
    <property type="taxonomic scope" value="Bacteria"/>
</dbReference>
<dbReference type="HOGENOM" id="CLU_173116_0_0_6"/>
<dbReference type="InParanoid" id="P32700"/>
<dbReference type="OMA" id="NIQFRKS"/>
<dbReference type="OrthoDB" id="6541880at2"/>
<dbReference type="PhylomeDB" id="P32700"/>
<dbReference type="BioCyc" id="EcoCyc:EG11937-MONOMER"/>
<dbReference type="PRO" id="PR:P32700"/>
<dbReference type="Proteomes" id="UP000000625">
    <property type="component" value="Chromosome"/>
</dbReference>
<dbReference type="InterPro" id="IPR016958">
    <property type="entry name" value="UCP030798"/>
</dbReference>
<dbReference type="Pfam" id="PF15940">
    <property type="entry name" value="YjcB"/>
    <property type="match status" value="1"/>
</dbReference>
<dbReference type="PIRSF" id="PIRSF030798">
    <property type="entry name" value="UCP030798"/>
    <property type="match status" value="1"/>
</dbReference>
<protein>
    <recommendedName>
        <fullName>Uncharacterized protein YjcB</fullName>
    </recommendedName>
</protein>
<reference key="1">
    <citation type="journal article" date="1993" name="Nucleic Acids Res.">
        <title>Analysis of the Escherichia coli genome. IV. DNA sequence of the region from 89.2 to 92.8 minutes.</title>
        <authorList>
            <person name="Blattner F.R."/>
            <person name="Burland V.D."/>
            <person name="Plunkett G. III"/>
            <person name="Sofia H.J."/>
            <person name="Daniels D.L."/>
        </authorList>
    </citation>
    <scope>NUCLEOTIDE SEQUENCE [LARGE SCALE GENOMIC DNA]</scope>
    <source>
        <strain>K12 / MG1655 / ATCC 47076</strain>
    </source>
</reference>
<reference key="2">
    <citation type="journal article" date="1997" name="Science">
        <title>The complete genome sequence of Escherichia coli K-12.</title>
        <authorList>
            <person name="Blattner F.R."/>
            <person name="Plunkett G. III"/>
            <person name="Bloch C.A."/>
            <person name="Perna N.T."/>
            <person name="Burland V."/>
            <person name="Riley M."/>
            <person name="Collado-Vides J."/>
            <person name="Glasner J.D."/>
            <person name="Rode C.K."/>
            <person name="Mayhew G.F."/>
            <person name="Gregor J."/>
            <person name="Davis N.W."/>
            <person name="Kirkpatrick H.A."/>
            <person name="Goeden M.A."/>
            <person name="Rose D.J."/>
            <person name="Mau B."/>
            <person name="Shao Y."/>
        </authorList>
    </citation>
    <scope>NUCLEOTIDE SEQUENCE [LARGE SCALE GENOMIC DNA]</scope>
    <source>
        <strain>K12 / MG1655 / ATCC 47076</strain>
    </source>
</reference>
<reference key="3">
    <citation type="journal article" date="2006" name="Mol. Syst. Biol.">
        <title>Highly accurate genome sequences of Escherichia coli K-12 strains MG1655 and W3110.</title>
        <authorList>
            <person name="Hayashi K."/>
            <person name="Morooka N."/>
            <person name="Yamamoto Y."/>
            <person name="Fujita K."/>
            <person name="Isono K."/>
            <person name="Choi S."/>
            <person name="Ohtsubo E."/>
            <person name="Baba T."/>
            <person name="Wanner B.L."/>
            <person name="Mori H."/>
            <person name="Horiuchi T."/>
        </authorList>
    </citation>
    <scope>NUCLEOTIDE SEQUENCE [LARGE SCALE GENOMIC DNA]</scope>
    <source>
        <strain>K12 / W3110 / ATCC 27325 / DSM 5911</strain>
    </source>
</reference>
<evidence type="ECO:0000305" key="1"/>
<proteinExistence type="predicted"/>
<name>YJCB_ECOLI</name>
<gene>
    <name type="primary">yjcB</name>
    <name type="ordered locus">b4060</name>
    <name type="ordered locus">JW5718</name>
</gene>
<sequence length="93" mass="10303">MATLTTGVVLLRWQLLSAVMMFLASTLNIRFRRSDYVGLAVISSGLGVVSACWFAMGLLGITMADITAIWHNIESVMIEEMNQTPPQWPMILT</sequence>
<organism>
    <name type="scientific">Escherichia coli (strain K12)</name>
    <dbReference type="NCBI Taxonomy" id="83333"/>
    <lineage>
        <taxon>Bacteria</taxon>
        <taxon>Pseudomonadati</taxon>
        <taxon>Pseudomonadota</taxon>
        <taxon>Gammaproteobacteria</taxon>
        <taxon>Enterobacterales</taxon>
        <taxon>Enterobacteriaceae</taxon>
        <taxon>Escherichia</taxon>
    </lineage>
</organism>